<protein>
    <recommendedName>
        <fullName>Uncharacterized protein MJ0988</fullName>
    </recommendedName>
</protein>
<feature type="chain" id="PRO_0000107131" description="Uncharacterized protein MJ0988">
    <location>
        <begin position="1"/>
        <end position="329"/>
    </location>
</feature>
<feature type="region of interest" description="Disordered" evidence="1">
    <location>
        <begin position="284"/>
        <end position="303"/>
    </location>
</feature>
<name>Y988_METJA</name>
<dbReference type="EMBL" id="L77117">
    <property type="protein sequence ID" value="AAB98990.1"/>
    <property type="molecule type" value="Genomic_DNA"/>
</dbReference>
<dbReference type="PIR" id="D64423">
    <property type="entry name" value="D64423"/>
</dbReference>
<dbReference type="RefSeq" id="WP_010870502.1">
    <property type="nucleotide sequence ID" value="NC_000909.1"/>
</dbReference>
<dbReference type="SMR" id="Q58395"/>
<dbReference type="STRING" id="243232.MJ_0988"/>
<dbReference type="PaxDb" id="243232-MJ_0988"/>
<dbReference type="EnsemblBacteria" id="AAB98990">
    <property type="protein sequence ID" value="AAB98990"/>
    <property type="gene ID" value="MJ_0988"/>
</dbReference>
<dbReference type="GeneID" id="1451886"/>
<dbReference type="KEGG" id="mja:MJ_0988"/>
<dbReference type="eggNOG" id="arCOG01565">
    <property type="taxonomic scope" value="Archaea"/>
</dbReference>
<dbReference type="HOGENOM" id="CLU_070736_0_0_2"/>
<dbReference type="InParanoid" id="Q58395"/>
<dbReference type="OrthoDB" id="350705at2157"/>
<dbReference type="PhylomeDB" id="Q58395"/>
<dbReference type="Proteomes" id="UP000000805">
    <property type="component" value="Chromosome"/>
</dbReference>
<dbReference type="GO" id="GO:0003676">
    <property type="term" value="F:nucleic acid binding"/>
    <property type="evidence" value="ECO:0007669"/>
    <property type="project" value="InterPro"/>
</dbReference>
<dbReference type="Gene3D" id="3.10.310.30">
    <property type="match status" value="1"/>
</dbReference>
<dbReference type="Gene3D" id="3.90.1640.10">
    <property type="entry name" value="inorganic pyrophosphatase (n-terminal core)"/>
    <property type="match status" value="1"/>
</dbReference>
<dbReference type="InterPro" id="IPR001667">
    <property type="entry name" value="DDH_dom"/>
</dbReference>
<dbReference type="InterPro" id="IPR038763">
    <property type="entry name" value="DHH_sf"/>
</dbReference>
<dbReference type="InterPro" id="IPR003156">
    <property type="entry name" value="DHHA1_dom"/>
</dbReference>
<dbReference type="InterPro" id="IPR051319">
    <property type="entry name" value="Oligoribo/pAp-PDE_c-di-AMP_PDE"/>
</dbReference>
<dbReference type="PANTHER" id="PTHR47618">
    <property type="entry name" value="BIFUNCTIONAL OLIGORIBONUCLEASE AND PAP PHOSPHATASE NRNA"/>
    <property type="match status" value="1"/>
</dbReference>
<dbReference type="PANTHER" id="PTHR47618:SF1">
    <property type="entry name" value="BIFUNCTIONAL OLIGORIBONUCLEASE AND PAP PHOSPHATASE NRNA"/>
    <property type="match status" value="1"/>
</dbReference>
<dbReference type="Pfam" id="PF01368">
    <property type="entry name" value="DHH"/>
    <property type="match status" value="1"/>
</dbReference>
<dbReference type="Pfam" id="PF02272">
    <property type="entry name" value="DHHA1"/>
    <property type="match status" value="1"/>
</dbReference>
<dbReference type="SUPFAM" id="SSF64182">
    <property type="entry name" value="DHH phosphoesterases"/>
    <property type="match status" value="1"/>
</dbReference>
<sequence length="329" mass="37316">MELLEYLKRDEVLFLCHHNADPDAVGSCVALKYLASQLNPNGKFRISADSVSKLSRNILNEIGERVDIEIYPKLPETVFIVDTASINQLKVNFDELKEREVILIDHHKKTDLADICKYYIIKEDYPSTSEIIAEIFKELNIFPPKNVRIALLCGIVYDTKHLKLANSKTFELISYLIKDISFQKILYLLSQESDVSKRTAHLKACSRMEIREFDKLRIALSHVSSHEASCAKTIVSIGADVAFVVAVRKKEKEIRVSARCRKHVSKYVHLGNLMEKIGKELGGSGGGHSEAGGLNAPYDKSKSKEKVIKEVLNLCYKRFVEEYKKAKQN</sequence>
<reference key="1">
    <citation type="journal article" date="1996" name="Science">
        <title>Complete genome sequence of the methanogenic archaeon, Methanococcus jannaschii.</title>
        <authorList>
            <person name="Bult C.J."/>
            <person name="White O."/>
            <person name="Olsen G.J."/>
            <person name="Zhou L."/>
            <person name="Fleischmann R.D."/>
            <person name="Sutton G.G."/>
            <person name="Blake J.A."/>
            <person name="FitzGerald L.M."/>
            <person name="Clayton R.A."/>
            <person name="Gocayne J.D."/>
            <person name="Kerlavage A.R."/>
            <person name="Dougherty B.A."/>
            <person name="Tomb J.-F."/>
            <person name="Adams M.D."/>
            <person name="Reich C.I."/>
            <person name="Overbeek R."/>
            <person name="Kirkness E.F."/>
            <person name="Weinstock K.G."/>
            <person name="Merrick J.M."/>
            <person name="Glodek A."/>
            <person name="Scott J.L."/>
            <person name="Geoghagen N.S.M."/>
            <person name="Weidman J.F."/>
            <person name="Fuhrmann J.L."/>
            <person name="Nguyen D."/>
            <person name="Utterback T.R."/>
            <person name="Kelley J.M."/>
            <person name="Peterson J.D."/>
            <person name="Sadow P.W."/>
            <person name="Hanna M.C."/>
            <person name="Cotton M.D."/>
            <person name="Roberts K.M."/>
            <person name="Hurst M.A."/>
            <person name="Kaine B.P."/>
            <person name="Borodovsky M."/>
            <person name="Klenk H.-P."/>
            <person name="Fraser C.M."/>
            <person name="Smith H.O."/>
            <person name="Woese C.R."/>
            <person name="Venter J.C."/>
        </authorList>
    </citation>
    <scope>NUCLEOTIDE SEQUENCE [LARGE SCALE GENOMIC DNA]</scope>
    <source>
        <strain>ATCC 43067 / DSM 2661 / JAL-1 / JCM 10045 / NBRC 100440</strain>
    </source>
</reference>
<keyword id="KW-1185">Reference proteome</keyword>
<proteinExistence type="predicted"/>
<evidence type="ECO:0000256" key="1">
    <source>
        <dbReference type="SAM" id="MobiDB-lite"/>
    </source>
</evidence>
<accession>Q58395</accession>
<organism>
    <name type="scientific">Methanocaldococcus jannaschii (strain ATCC 43067 / DSM 2661 / JAL-1 / JCM 10045 / NBRC 100440)</name>
    <name type="common">Methanococcus jannaschii</name>
    <dbReference type="NCBI Taxonomy" id="243232"/>
    <lineage>
        <taxon>Archaea</taxon>
        <taxon>Methanobacteriati</taxon>
        <taxon>Methanobacteriota</taxon>
        <taxon>Methanomada group</taxon>
        <taxon>Methanococci</taxon>
        <taxon>Methanococcales</taxon>
        <taxon>Methanocaldococcaceae</taxon>
        <taxon>Methanocaldococcus</taxon>
    </lineage>
</organism>
<gene>
    <name type="ordered locus">MJ0988</name>
</gene>